<evidence type="ECO:0000250" key="1"/>
<evidence type="ECO:0000305" key="2"/>
<name>UMPS1_ORYSJ</name>
<accession>Q9LDN2</accession>
<accession>A0A0P0VCT6</accession>
<accession>Q9M666</accession>
<organism>
    <name type="scientific">Oryza sativa subsp. japonica</name>
    <name type="common">Rice</name>
    <dbReference type="NCBI Taxonomy" id="39947"/>
    <lineage>
        <taxon>Eukaryota</taxon>
        <taxon>Viridiplantae</taxon>
        <taxon>Streptophyta</taxon>
        <taxon>Embryophyta</taxon>
        <taxon>Tracheophyta</taxon>
        <taxon>Spermatophyta</taxon>
        <taxon>Magnoliopsida</taxon>
        <taxon>Liliopsida</taxon>
        <taxon>Poales</taxon>
        <taxon>Poaceae</taxon>
        <taxon>BOP clade</taxon>
        <taxon>Oryzoideae</taxon>
        <taxon>Oryzeae</taxon>
        <taxon>Oryzinae</taxon>
        <taxon>Oryza</taxon>
        <taxon>Oryza sativa</taxon>
    </lineage>
</organism>
<dbReference type="EC" id="2.4.2.10"/>
<dbReference type="EC" id="4.1.1.23"/>
<dbReference type="EMBL" id="AB031395">
    <property type="protein sequence ID" value="BAA92171.1"/>
    <property type="molecule type" value="mRNA"/>
</dbReference>
<dbReference type="EMBL" id="AP003735">
    <property type="protein sequence ID" value="BAB86207.1"/>
    <property type="molecule type" value="Genomic_DNA"/>
</dbReference>
<dbReference type="EMBL" id="AP008207">
    <property type="protein sequence ID" value="BAF07326.1"/>
    <property type="molecule type" value="Genomic_DNA"/>
</dbReference>
<dbReference type="EMBL" id="AP014957">
    <property type="protein sequence ID" value="BAS76243.1"/>
    <property type="molecule type" value="Genomic_DNA"/>
</dbReference>
<dbReference type="EMBL" id="CM000138">
    <property type="protein sequence ID" value="EEE56010.1"/>
    <property type="molecule type" value="Genomic_DNA"/>
</dbReference>
<dbReference type="EMBL" id="AF210322">
    <property type="protein sequence ID" value="AAF61489.1"/>
    <property type="molecule type" value="mRNA"/>
</dbReference>
<dbReference type="RefSeq" id="XP_015622485.1">
    <property type="nucleotide sequence ID" value="XM_015766999.1"/>
</dbReference>
<dbReference type="SMR" id="Q9LDN2"/>
<dbReference type="FunCoup" id="Q9LDN2">
    <property type="interactions" value="3243"/>
</dbReference>
<dbReference type="STRING" id="39947.Q9LDN2"/>
<dbReference type="PaxDb" id="39947-Q9LDN2"/>
<dbReference type="EnsemblPlants" id="Os01t0951200-01">
    <property type="protein sequence ID" value="Os01t0951200-01"/>
    <property type="gene ID" value="Os01g0951200"/>
</dbReference>
<dbReference type="Gramene" id="Os01t0951200-01">
    <property type="protein sequence ID" value="Os01t0951200-01"/>
    <property type="gene ID" value="Os01g0951200"/>
</dbReference>
<dbReference type="KEGG" id="dosa:Os01g0951200"/>
<dbReference type="eggNOG" id="KOG1377">
    <property type="taxonomic scope" value="Eukaryota"/>
</dbReference>
<dbReference type="HOGENOM" id="CLU_049275_1_0_1"/>
<dbReference type="InParanoid" id="Q9LDN2"/>
<dbReference type="OMA" id="SAKHVCG"/>
<dbReference type="OrthoDB" id="10263753at2759"/>
<dbReference type="UniPathway" id="UPA00070">
    <property type="reaction ID" value="UER00119"/>
</dbReference>
<dbReference type="UniPathway" id="UPA00070">
    <property type="reaction ID" value="UER00120"/>
</dbReference>
<dbReference type="Proteomes" id="UP000000763">
    <property type="component" value="Chromosome 1"/>
</dbReference>
<dbReference type="Proteomes" id="UP000007752">
    <property type="component" value="Chromosome 1"/>
</dbReference>
<dbReference type="Proteomes" id="UP000059680">
    <property type="component" value="Chromosome 1"/>
</dbReference>
<dbReference type="GO" id="GO:0004588">
    <property type="term" value="F:orotate phosphoribosyltransferase activity"/>
    <property type="evidence" value="ECO:0000318"/>
    <property type="project" value="GO_Central"/>
</dbReference>
<dbReference type="GO" id="GO:0004590">
    <property type="term" value="F:orotidine-5'-phosphate decarboxylase activity"/>
    <property type="evidence" value="ECO:0000318"/>
    <property type="project" value="GO_Central"/>
</dbReference>
<dbReference type="GO" id="GO:0006207">
    <property type="term" value="P:'de novo' pyrimidine nucleobase biosynthetic process"/>
    <property type="evidence" value="ECO:0007669"/>
    <property type="project" value="InterPro"/>
</dbReference>
<dbReference type="GO" id="GO:0044205">
    <property type="term" value="P:'de novo' UMP biosynthetic process"/>
    <property type="evidence" value="ECO:0007669"/>
    <property type="project" value="UniProtKB-UniPathway"/>
</dbReference>
<dbReference type="GO" id="GO:0019856">
    <property type="term" value="P:pyrimidine nucleobase biosynthetic process"/>
    <property type="evidence" value="ECO:0000318"/>
    <property type="project" value="GO_Central"/>
</dbReference>
<dbReference type="GO" id="GO:0006222">
    <property type="term" value="P:UMP biosynthetic process"/>
    <property type="evidence" value="ECO:0000318"/>
    <property type="project" value="GO_Central"/>
</dbReference>
<dbReference type="CDD" id="cd04725">
    <property type="entry name" value="OMP_decarboxylase_like"/>
    <property type="match status" value="1"/>
</dbReference>
<dbReference type="CDD" id="cd06223">
    <property type="entry name" value="PRTases_typeI"/>
    <property type="match status" value="1"/>
</dbReference>
<dbReference type="FunFam" id="3.20.20.70:FF:000092">
    <property type="entry name" value="Uridine monophosphate synthetase"/>
    <property type="match status" value="1"/>
</dbReference>
<dbReference type="FunFam" id="3.40.50.2020:FF:000025">
    <property type="entry name" value="Uridine monophosphate synthetase"/>
    <property type="match status" value="1"/>
</dbReference>
<dbReference type="Gene3D" id="3.40.50.2020">
    <property type="match status" value="1"/>
</dbReference>
<dbReference type="Gene3D" id="3.20.20.70">
    <property type="entry name" value="Aldolase class I"/>
    <property type="match status" value="1"/>
</dbReference>
<dbReference type="HAMAP" id="MF_01208">
    <property type="entry name" value="PyrE"/>
    <property type="match status" value="1"/>
</dbReference>
<dbReference type="InterPro" id="IPR013785">
    <property type="entry name" value="Aldolase_TIM"/>
</dbReference>
<dbReference type="InterPro" id="IPR014732">
    <property type="entry name" value="OMPdecase"/>
</dbReference>
<dbReference type="InterPro" id="IPR018089">
    <property type="entry name" value="OMPdecase_AS"/>
</dbReference>
<dbReference type="InterPro" id="IPR001754">
    <property type="entry name" value="OMPdeCOase_dom"/>
</dbReference>
<dbReference type="InterPro" id="IPR023031">
    <property type="entry name" value="OPRT"/>
</dbReference>
<dbReference type="InterPro" id="IPR004467">
    <property type="entry name" value="Or_phspho_trans_dom"/>
</dbReference>
<dbReference type="InterPro" id="IPR000836">
    <property type="entry name" value="PRibTrfase_dom"/>
</dbReference>
<dbReference type="InterPro" id="IPR029057">
    <property type="entry name" value="PRTase-like"/>
</dbReference>
<dbReference type="InterPro" id="IPR011060">
    <property type="entry name" value="RibuloseP-bd_barrel"/>
</dbReference>
<dbReference type="NCBIfam" id="NF010382">
    <property type="entry name" value="PRK13809.1"/>
    <property type="match status" value="1"/>
</dbReference>
<dbReference type="NCBIfam" id="TIGR00336">
    <property type="entry name" value="pyrE"/>
    <property type="match status" value="1"/>
</dbReference>
<dbReference type="NCBIfam" id="TIGR01740">
    <property type="entry name" value="pyrF"/>
    <property type="match status" value="1"/>
</dbReference>
<dbReference type="PANTHER" id="PTHR19278">
    <property type="entry name" value="OROTATE PHOSPHORIBOSYLTRANSFERASE"/>
    <property type="match status" value="1"/>
</dbReference>
<dbReference type="PANTHER" id="PTHR19278:SF9">
    <property type="entry name" value="URIDINE 5'-MONOPHOSPHATE SYNTHASE"/>
    <property type="match status" value="1"/>
</dbReference>
<dbReference type="Pfam" id="PF00215">
    <property type="entry name" value="OMPdecase"/>
    <property type="match status" value="1"/>
</dbReference>
<dbReference type="Pfam" id="PF00156">
    <property type="entry name" value="Pribosyltran"/>
    <property type="match status" value="1"/>
</dbReference>
<dbReference type="SMART" id="SM00934">
    <property type="entry name" value="OMPdecase"/>
    <property type="match status" value="1"/>
</dbReference>
<dbReference type="SUPFAM" id="SSF53271">
    <property type="entry name" value="PRTase-like"/>
    <property type="match status" value="1"/>
</dbReference>
<dbReference type="SUPFAM" id="SSF51366">
    <property type="entry name" value="Ribulose-phoshate binding barrel"/>
    <property type="match status" value="1"/>
</dbReference>
<dbReference type="PROSITE" id="PS00156">
    <property type="entry name" value="OMPDECASE"/>
    <property type="match status" value="1"/>
</dbReference>
<dbReference type="PROSITE" id="PS00103">
    <property type="entry name" value="PUR_PYR_PR_TRANSFER"/>
    <property type="match status" value="1"/>
</dbReference>
<reference key="1">
    <citation type="submission" date="1999-08" db="EMBL/GenBank/DDBJ databases">
        <title>Oryza sativa UMPS1 mRNA for UMP synthase.</title>
        <authorList>
            <person name="Ito Y."/>
        </authorList>
    </citation>
    <scope>NUCLEOTIDE SEQUENCE [MRNA]</scope>
    <source>
        <strain>cv. Nipponbare</strain>
    </source>
</reference>
<reference key="2">
    <citation type="journal article" date="2002" name="Nature">
        <title>The genome sequence and structure of rice chromosome 1.</title>
        <authorList>
            <person name="Sasaki T."/>
            <person name="Matsumoto T."/>
            <person name="Yamamoto K."/>
            <person name="Sakata K."/>
            <person name="Baba T."/>
            <person name="Katayose Y."/>
            <person name="Wu J."/>
            <person name="Niimura Y."/>
            <person name="Cheng Z."/>
            <person name="Nagamura Y."/>
            <person name="Antonio B.A."/>
            <person name="Kanamori H."/>
            <person name="Hosokawa S."/>
            <person name="Masukawa M."/>
            <person name="Arikawa K."/>
            <person name="Chiden Y."/>
            <person name="Hayashi M."/>
            <person name="Okamoto M."/>
            <person name="Ando T."/>
            <person name="Aoki H."/>
            <person name="Arita K."/>
            <person name="Hamada M."/>
            <person name="Harada C."/>
            <person name="Hijishita S."/>
            <person name="Honda M."/>
            <person name="Ichikawa Y."/>
            <person name="Idonuma A."/>
            <person name="Iijima M."/>
            <person name="Ikeda M."/>
            <person name="Ikeno M."/>
            <person name="Ito S."/>
            <person name="Ito T."/>
            <person name="Ito Y."/>
            <person name="Ito Y."/>
            <person name="Iwabuchi A."/>
            <person name="Kamiya K."/>
            <person name="Karasawa W."/>
            <person name="Katagiri S."/>
            <person name="Kikuta A."/>
            <person name="Kobayashi N."/>
            <person name="Kono I."/>
            <person name="Machita K."/>
            <person name="Maehara T."/>
            <person name="Mizuno H."/>
            <person name="Mizubayashi T."/>
            <person name="Mukai Y."/>
            <person name="Nagasaki H."/>
            <person name="Nakashima M."/>
            <person name="Nakama Y."/>
            <person name="Nakamichi Y."/>
            <person name="Nakamura M."/>
            <person name="Namiki N."/>
            <person name="Negishi M."/>
            <person name="Ohta I."/>
            <person name="Ono N."/>
            <person name="Saji S."/>
            <person name="Sakai K."/>
            <person name="Shibata M."/>
            <person name="Shimokawa T."/>
            <person name="Shomura A."/>
            <person name="Song J."/>
            <person name="Takazaki Y."/>
            <person name="Terasawa K."/>
            <person name="Tsuji K."/>
            <person name="Waki K."/>
            <person name="Yamagata H."/>
            <person name="Yamane H."/>
            <person name="Yoshiki S."/>
            <person name="Yoshihara R."/>
            <person name="Yukawa K."/>
            <person name="Zhong H."/>
            <person name="Iwama H."/>
            <person name="Endo T."/>
            <person name="Ito H."/>
            <person name="Hahn J.H."/>
            <person name="Kim H.-I."/>
            <person name="Eun M.-Y."/>
            <person name="Yano M."/>
            <person name="Jiang J."/>
            <person name="Gojobori T."/>
        </authorList>
    </citation>
    <scope>NUCLEOTIDE SEQUENCE [LARGE SCALE GENOMIC DNA]</scope>
    <source>
        <strain>cv. Nipponbare</strain>
    </source>
</reference>
<reference key="3">
    <citation type="journal article" date="2005" name="Nature">
        <title>The map-based sequence of the rice genome.</title>
        <authorList>
            <consortium name="International rice genome sequencing project (IRGSP)"/>
        </authorList>
    </citation>
    <scope>NUCLEOTIDE SEQUENCE [LARGE SCALE GENOMIC DNA]</scope>
    <source>
        <strain>cv. Nipponbare</strain>
    </source>
</reference>
<reference key="4">
    <citation type="journal article" date="2008" name="Nucleic Acids Res.">
        <title>The rice annotation project database (RAP-DB): 2008 update.</title>
        <authorList>
            <consortium name="The rice annotation project (RAP)"/>
        </authorList>
    </citation>
    <scope>GENOME REANNOTATION</scope>
    <source>
        <strain>cv. Nipponbare</strain>
    </source>
</reference>
<reference key="5">
    <citation type="journal article" date="2013" name="Rice">
        <title>Improvement of the Oryza sativa Nipponbare reference genome using next generation sequence and optical map data.</title>
        <authorList>
            <person name="Kawahara Y."/>
            <person name="de la Bastide M."/>
            <person name="Hamilton J.P."/>
            <person name="Kanamori H."/>
            <person name="McCombie W.R."/>
            <person name="Ouyang S."/>
            <person name="Schwartz D.C."/>
            <person name="Tanaka T."/>
            <person name="Wu J."/>
            <person name="Zhou S."/>
            <person name="Childs K.L."/>
            <person name="Davidson R.M."/>
            <person name="Lin H."/>
            <person name="Quesada-Ocampo L."/>
            <person name="Vaillancourt B."/>
            <person name="Sakai H."/>
            <person name="Lee S.S."/>
            <person name="Kim J."/>
            <person name="Numa H."/>
            <person name="Itoh T."/>
            <person name="Buell C.R."/>
            <person name="Matsumoto T."/>
        </authorList>
    </citation>
    <scope>GENOME REANNOTATION</scope>
    <source>
        <strain>cv. Nipponbare</strain>
    </source>
</reference>
<reference key="6">
    <citation type="journal article" date="2005" name="PLoS Biol.">
        <title>The genomes of Oryza sativa: a history of duplications.</title>
        <authorList>
            <person name="Yu J."/>
            <person name="Wang J."/>
            <person name="Lin W."/>
            <person name="Li S."/>
            <person name="Li H."/>
            <person name="Zhou J."/>
            <person name="Ni P."/>
            <person name="Dong W."/>
            <person name="Hu S."/>
            <person name="Zeng C."/>
            <person name="Zhang J."/>
            <person name="Zhang Y."/>
            <person name="Li R."/>
            <person name="Xu Z."/>
            <person name="Li S."/>
            <person name="Li X."/>
            <person name="Zheng H."/>
            <person name="Cong L."/>
            <person name="Lin L."/>
            <person name="Yin J."/>
            <person name="Geng J."/>
            <person name="Li G."/>
            <person name="Shi J."/>
            <person name="Liu J."/>
            <person name="Lv H."/>
            <person name="Li J."/>
            <person name="Wang J."/>
            <person name="Deng Y."/>
            <person name="Ran L."/>
            <person name="Shi X."/>
            <person name="Wang X."/>
            <person name="Wu Q."/>
            <person name="Li C."/>
            <person name="Ren X."/>
            <person name="Wang J."/>
            <person name="Wang X."/>
            <person name="Li D."/>
            <person name="Liu D."/>
            <person name="Zhang X."/>
            <person name="Ji Z."/>
            <person name="Zhao W."/>
            <person name="Sun Y."/>
            <person name="Zhang Z."/>
            <person name="Bao J."/>
            <person name="Han Y."/>
            <person name="Dong L."/>
            <person name="Ji J."/>
            <person name="Chen P."/>
            <person name="Wu S."/>
            <person name="Liu J."/>
            <person name="Xiao Y."/>
            <person name="Bu D."/>
            <person name="Tan J."/>
            <person name="Yang L."/>
            <person name="Ye C."/>
            <person name="Zhang J."/>
            <person name="Xu J."/>
            <person name="Zhou Y."/>
            <person name="Yu Y."/>
            <person name="Zhang B."/>
            <person name="Zhuang S."/>
            <person name="Wei H."/>
            <person name="Liu B."/>
            <person name="Lei M."/>
            <person name="Yu H."/>
            <person name="Li Y."/>
            <person name="Xu H."/>
            <person name="Wei S."/>
            <person name="He X."/>
            <person name="Fang L."/>
            <person name="Zhang Z."/>
            <person name="Zhang Y."/>
            <person name="Huang X."/>
            <person name="Su Z."/>
            <person name="Tong W."/>
            <person name="Li J."/>
            <person name="Tong Z."/>
            <person name="Li S."/>
            <person name="Ye J."/>
            <person name="Wang L."/>
            <person name="Fang L."/>
            <person name="Lei T."/>
            <person name="Chen C.-S."/>
            <person name="Chen H.-C."/>
            <person name="Xu Z."/>
            <person name="Li H."/>
            <person name="Huang H."/>
            <person name="Zhang F."/>
            <person name="Xu H."/>
            <person name="Li N."/>
            <person name="Zhao C."/>
            <person name="Li S."/>
            <person name="Dong L."/>
            <person name="Huang Y."/>
            <person name="Li L."/>
            <person name="Xi Y."/>
            <person name="Qi Q."/>
            <person name="Li W."/>
            <person name="Zhang B."/>
            <person name="Hu W."/>
            <person name="Zhang Y."/>
            <person name="Tian X."/>
            <person name="Jiao Y."/>
            <person name="Liang X."/>
            <person name="Jin J."/>
            <person name="Gao L."/>
            <person name="Zheng W."/>
            <person name="Hao B."/>
            <person name="Liu S.-M."/>
            <person name="Wang W."/>
            <person name="Yuan L."/>
            <person name="Cao M."/>
            <person name="McDermott J."/>
            <person name="Samudrala R."/>
            <person name="Wang J."/>
            <person name="Wong G.K.-S."/>
            <person name="Yang H."/>
        </authorList>
    </citation>
    <scope>NUCLEOTIDE SEQUENCE [LARGE SCALE GENOMIC DNA]</scope>
    <source>
        <strain>cv. Nipponbare</strain>
    </source>
</reference>
<reference key="7">
    <citation type="online journal article" date="2000" name="Plant Gene Register">
        <title>Characterization of a cDNA encoding UMP synthase from rice.</title>
        <authorList>
            <person name="Park S."/>
            <person name="Thornburg R.W."/>
        </authorList>
        <locator>PGR00-043</locator>
    </citation>
    <scope>NUCLEOTIDE SEQUENCE [MRNA] OF 162-477</scope>
    <source>
        <strain>cv. Nipponbare</strain>
    </source>
</reference>
<sequence length="477" mass="50804">MDAAAQESLILELHAIEAIKFGTFVLKSGITSPIYLDLRALVSHPGLLSSIATLLHTLPATRPYDLLCGVPYTALPIASVLSVHRSVPMVMRRKEAKAHGTAKSIEGAFRAGEAVLIIEDLVTSGASVLETAAPLRDQGLVVADAVVVVDREQGGRENLAANGITLHSLMTLTEVLAVLLKHGKVTEEKAREVRQFLDANRKVTVPGAAGAVKPKAVRKGFAERAGLAKNPMGKRLFEVMEAKQSNLCVAADVGTAKELLELAEKVGPEICMLKTHVDILSDFTPDFGAKLCSIAEKHNFLIFEDRKFADIGNTVTMQYEGGIFRILDWADIVNAHIIPGPGIVDGLKLKGLPKGRGLLLLAEMSSAGNLAHGEYTAAAVKIAEQHSDFVIGFISVNPASWSVAPSSPAFIHATPGVQMVSGGDALGQQYNTPHSVINDRGSDIIIVGRGIIKASNPAETAREYRIQGWGAYQSSLP</sequence>
<comment type="catalytic activity">
    <reaction>
        <text>orotidine 5'-phosphate + diphosphate = orotate + 5-phospho-alpha-D-ribose 1-diphosphate</text>
        <dbReference type="Rhea" id="RHEA:10380"/>
        <dbReference type="ChEBI" id="CHEBI:30839"/>
        <dbReference type="ChEBI" id="CHEBI:33019"/>
        <dbReference type="ChEBI" id="CHEBI:57538"/>
        <dbReference type="ChEBI" id="CHEBI:58017"/>
        <dbReference type="EC" id="2.4.2.10"/>
    </reaction>
</comment>
<comment type="catalytic activity">
    <reaction>
        <text>orotidine 5'-phosphate + H(+) = UMP + CO2</text>
        <dbReference type="Rhea" id="RHEA:11596"/>
        <dbReference type="ChEBI" id="CHEBI:15378"/>
        <dbReference type="ChEBI" id="CHEBI:16526"/>
        <dbReference type="ChEBI" id="CHEBI:57538"/>
        <dbReference type="ChEBI" id="CHEBI:57865"/>
        <dbReference type="EC" id="4.1.1.23"/>
    </reaction>
</comment>
<comment type="pathway">
    <text>Pyrimidine metabolism; UMP biosynthesis via de novo pathway; UMP from orotate: step 1/2.</text>
</comment>
<comment type="pathway">
    <text>Pyrimidine metabolism; UMP biosynthesis via de novo pathway; UMP from orotate: step 2/2.</text>
</comment>
<comment type="similarity">
    <text evidence="2">In the N-terminal section; belongs to the purine/pyrimidine phosphoribosyltransferase family.</text>
</comment>
<comment type="similarity">
    <text evidence="2">In the C-terminal section; belongs to the OMP decarboxylase family.</text>
</comment>
<feature type="chain" id="PRO_0000423081" description="Uridine 5'-monophosphate synthase">
    <location>
        <begin position="1"/>
        <end position="477"/>
    </location>
</feature>
<feature type="active site" evidence="1">
    <location>
        <position position="307"/>
    </location>
</feature>
<protein>
    <recommendedName>
        <fullName>Uridine 5'-monophosphate synthase</fullName>
        <shortName>UMP synthase</shortName>
    </recommendedName>
    <domain>
        <recommendedName>
            <fullName>Orotate phosphoribosyltransferase</fullName>
            <shortName>OPRTase</shortName>
            <ecNumber>2.4.2.10</ecNumber>
        </recommendedName>
    </domain>
    <domain>
        <recommendedName>
            <fullName>Orotidine 5'-phosphate decarboxylase</fullName>
            <ecNumber>4.1.1.23</ecNumber>
        </recommendedName>
        <alternativeName>
            <fullName>OMPdecase</fullName>
        </alternativeName>
    </domain>
</protein>
<gene>
    <name type="primary">UMPS1</name>
    <name type="ordered locus">Os01g0951200</name>
    <name type="ordered locus">LOC_Os01g72240</name>
    <name type="ORF">B1147A04.37</name>
    <name type="ORF">OsJ_04774</name>
</gene>
<keyword id="KW-0210">Decarboxylase</keyword>
<keyword id="KW-0328">Glycosyltransferase</keyword>
<keyword id="KW-0456">Lyase</keyword>
<keyword id="KW-0511">Multifunctional enzyme</keyword>
<keyword id="KW-0665">Pyrimidine biosynthesis</keyword>
<keyword id="KW-1185">Reference proteome</keyword>
<keyword id="KW-0808">Transferase</keyword>
<proteinExistence type="evidence at transcript level"/>